<keyword id="KW-0067">ATP-binding</keyword>
<keyword id="KW-0963">Cytoplasm</keyword>
<keyword id="KW-0418">Kinase</keyword>
<keyword id="KW-0547">Nucleotide-binding</keyword>
<keyword id="KW-0808">Transferase</keyword>
<reference key="1">
    <citation type="submission" date="2002-12" db="EMBL/GenBank/DDBJ databases">
        <title>Complete genome sequence of Vibrio vulnificus CMCP6.</title>
        <authorList>
            <person name="Rhee J.H."/>
            <person name="Kim S.Y."/>
            <person name="Chung S.S."/>
            <person name="Kim J.J."/>
            <person name="Moon Y.H."/>
            <person name="Jeong H."/>
            <person name="Choy H.E."/>
        </authorList>
    </citation>
    <scope>NUCLEOTIDE SEQUENCE [LARGE SCALE GENOMIC DNA]</scope>
    <source>
        <strain>CMCP6</strain>
    </source>
</reference>
<accession>Q8DDV6</accession>
<protein>
    <recommendedName>
        <fullName evidence="1">Guanylate kinase</fullName>
        <ecNumber evidence="1">2.7.4.8</ecNumber>
    </recommendedName>
    <alternativeName>
        <fullName evidence="1">GMP kinase</fullName>
    </alternativeName>
</protein>
<feature type="chain" id="PRO_0000170638" description="Guanylate kinase">
    <location>
        <begin position="1"/>
        <end position="207"/>
    </location>
</feature>
<feature type="domain" description="Guanylate kinase-like" evidence="1">
    <location>
        <begin position="4"/>
        <end position="184"/>
    </location>
</feature>
<feature type="binding site" evidence="1">
    <location>
        <begin position="11"/>
        <end position="18"/>
    </location>
    <ligand>
        <name>ATP</name>
        <dbReference type="ChEBI" id="CHEBI:30616"/>
    </ligand>
</feature>
<organism>
    <name type="scientific">Vibrio vulnificus (strain CMCP6)</name>
    <dbReference type="NCBI Taxonomy" id="216895"/>
    <lineage>
        <taxon>Bacteria</taxon>
        <taxon>Pseudomonadati</taxon>
        <taxon>Pseudomonadota</taxon>
        <taxon>Gammaproteobacteria</taxon>
        <taxon>Vibrionales</taxon>
        <taxon>Vibrionaceae</taxon>
        <taxon>Vibrio</taxon>
    </lineage>
</organism>
<gene>
    <name evidence="1" type="primary">gmk</name>
    <name type="ordered locus">VV1_0850</name>
</gene>
<sequence>MGKGTLYIVSAPSGAGKSSLISAMLEKNPTYAMKVSVSHTTRGMRPGEQDGVHYHFVEKEHFEDLITKGEFLEYAEVFGNYYGTSRVWIENTLDKGIDVFLDIDWQGARQIREQMPHAKSIFILPPSNGELERRLNTRGQDSEAVIAKRMAEAKSEISHYNEYDYVIINDDFDTALMDFKAIIRAERLKQDKQAAKYSGMLDALLAE</sequence>
<proteinExistence type="inferred from homology"/>
<evidence type="ECO:0000255" key="1">
    <source>
        <dbReference type="HAMAP-Rule" id="MF_00328"/>
    </source>
</evidence>
<comment type="function">
    <text evidence="1">Essential for recycling GMP and indirectly, cGMP.</text>
</comment>
<comment type="catalytic activity">
    <reaction evidence="1">
        <text>GMP + ATP = GDP + ADP</text>
        <dbReference type="Rhea" id="RHEA:20780"/>
        <dbReference type="ChEBI" id="CHEBI:30616"/>
        <dbReference type="ChEBI" id="CHEBI:58115"/>
        <dbReference type="ChEBI" id="CHEBI:58189"/>
        <dbReference type="ChEBI" id="CHEBI:456216"/>
        <dbReference type="EC" id="2.7.4.8"/>
    </reaction>
</comment>
<comment type="subcellular location">
    <subcellularLocation>
        <location evidence="1">Cytoplasm</location>
    </subcellularLocation>
</comment>
<comment type="similarity">
    <text evidence="1">Belongs to the guanylate kinase family.</text>
</comment>
<dbReference type="EC" id="2.7.4.8" evidence="1"/>
<dbReference type="EMBL" id="AE016795">
    <property type="protein sequence ID" value="AAO09353.1"/>
    <property type="molecule type" value="Genomic_DNA"/>
</dbReference>
<dbReference type="RefSeq" id="WP_011078918.1">
    <property type="nucleotide sequence ID" value="NC_004459.3"/>
</dbReference>
<dbReference type="SMR" id="Q8DDV6"/>
<dbReference type="GeneID" id="93895149"/>
<dbReference type="KEGG" id="vvu:VV1_0850"/>
<dbReference type="HOGENOM" id="CLU_001715_1_0_6"/>
<dbReference type="Proteomes" id="UP000002275">
    <property type="component" value="Chromosome 1"/>
</dbReference>
<dbReference type="GO" id="GO:0005829">
    <property type="term" value="C:cytosol"/>
    <property type="evidence" value="ECO:0007669"/>
    <property type="project" value="TreeGrafter"/>
</dbReference>
<dbReference type="GO" id="GO:0005524">
    <property type="term" value="F:ATP binding"/>
    <property type="evidence" value="ECO:0007669"/>
    <property type="project" value="UniProtKB-UniRule"/>
</dbReference>
<dbReference type="GO" id="GO:0004385">
    <property type="term" value="F:guanylate kinase activity"/>
    <property type="evidence" value="ECO:0007669"/>
    <property type="project" value="UniProtKB-UniRule"/>
</dbReference>
<dbReference type="CDD" id="cd00071">
    <property type="entry name" value="GMPK"/>
    <property type="match status" value="1"/>
</dbReference>
<dbReference type="FunFam" id="3.40.50.300:FF:000855">
    <property type="entry name" value="Guanylate kinase"/>
    <property type="match status" value="1"/>
</dbReference>
<dbReference type="FunFam" id="3.30.63.10:FF:000002">
    <property type="entry name" value="Guanylate kinase 1"/>
    <property type="match status" value="1"/>
</dbReference>
<dbReference type="Gene3D" id="3.30.63.10">
    <property type="entry name" value="Guanylate Kinase phosphate binding domain"/>
    <property type="match status" value="1"/>
</dbReference>
<dbReference type="Gene3D" id="3.40.50.300">
    <property type="entry name" value="P-loop containing nucleotide triphosphate hydrolases"/>
    <property type="match status" value="1"/>
</dbReference>
<dbReference type="HAMAP" id="MF_00328">
    <property type="entry name" value="Guanylate_kinase"/>
    <property type="match status" value="1"/>
</dbReference>
<dbReference type="InterPro" id="IPR008145">
    <property type="entry name" value="GK/Ca_channel_bsu"/>
</dbReference>
<dbReference type="InterPro" id="IPR008144">
    <property type="entry name" value="Guanylate_kin-like_dom"/>
</dbReference>
<dbReference type="InterPro" id="IPR017665">
    <property type="entry name" value="Guanylate_kinase"/>
</dbReference>
<dbReference type="InterPro" id="IPR020590">
    <property type="entry name" value="Guanylate_kinase_CS"/>
</dbReference>
<dbReference type="InterPro" id="IPR027417">
    <property type="entry name" value="P-loop_NTPase"/>
</dbReference>
<dbReference type="NCBIfam" id="TIGR03263">
    <property type="entry name" value="guanyl_kin"/>
    <property type="match status" value="1"/>
</dbReference>
<dbReference type="PANTHER" id="PTHR23117:SF13">
    <property type="entry name" value="GUANYLATE KINASE"/>
    <property type="match status" value="1"/>
</dbReference>
<dbReference type="PANTHER" id="PTHR23117">
    <property type="entry name" value="GUANYLATE KINASE-RELATED"/>
    <property type="match status" value="1"/>
</dbReference>
<dbReference type="Pfam" id="PF00625">
    <property type="entry name" value="Guanylate_kin"/>
    <property type="match status" value="1"/>
</dbReference>
<dbReference type="SMART" id="SM00072">
    <property type="entry name" value="GuKc"/>
    <property type="match status" value="1"/>
</dbReference>
<dbReference type="SUPFAM" id="SSF52540">
    <property type="entry name" value="P-loop containing nucleoside triphosphate hydrolases"/>
    <property type="match status" value="1"/>
</dbReference>
<dbReference type="PROSITE" id="PS00856">
    <property type="entry name" value="GUANYLATE_KINASE_1"/>
    <property type="match status" value="1"/>
</dbReference>
<dbReference type="PROSITE" id="PS50052">
    <property type="entry name" value="GUANYLATE_KINASE_2"/>
    <property type="match status" value="1"/>
</dbReference>
<name>KGUA_VIBVU</name>